<protein>
    <recommendedName>
        <fullName evidence="1">Histidinol-phosphate aminotransferase 1</fullName>
        <ecNumber evidence="1">2.6.1.9</ecNumber>
    </recommendedName>
    <alternativeName>
        <fullName evidence="1">Imidazole acetol-phosphate transaminase 1</fullName>
    </alternativeName>
</protein>
<feature type="chain" id="PRO_0000153381" description="Histidinol-phosphate aminotransferase 1">
    <location>
        <begin position="1"/>
        <end position="364"/>
    </location>
</feature>
<feature type="modified residue" description="N6-(pyridoxal phosphate)lysine" evidence="1">
    <location>
        <position position="211"/>
    </location>
</feature>
<sequence>MSILNLVRADLLNSKNYVPGGESARYRSHANELPWSPVTMGEHNLNYYPNIGLQIELQKQLAKRYQIYSDQIILTRGSDDGIDLTTRLFLTAGKDAFMQFPPTFPMYAFYVRLQQAELIECPLDRRTNFRLTLDQIENSWKPNCKIIMFCSPNNPTGNLVDLNLIAKTCELYANQSIIVVDEAYIEFANAPSATSLIGEFENLIVLRTLSKAFGLAGLRLGCIIAQSPIIQAFNKIIAPYSIATPSMELAKRALNNSDWFTKTIEQIKSSRAWVIKKFADNPIIEKIYPTETNFILIQTRFSKQLTTWLAHYGIAVRDFPSSSLLHDHLRITVGHDEQNQLLINTLSSFNADVAGLNYEKDFIY</sequence>
<gene>
    <name evidence="1" type="primary">hisC1</name>
    <name type="ordered locus">lpg1198</name>
</gene>
<accession>Q5ZW88</accession>
<keyword id="KW-0028">Amino-acid biosynthesis</keyword>
<keyword id="KW-0032">Aminotransferase</keyword>
<keyword id="KW-0368">Histidine biosynthesis</keyword>
<keyword id="KW-0663">Pyridoxal phosphate</keyword>
<keyword id="KW-1185">Reference proteome</keyword>
<keyword id="KW-0808">Transferase</keyword>
<comment type="catalytic activity">
    <reaction evidence="1">
        <text>L-histidinol phosphate + 2-oxoglutarate = 3-(imidazol-4-yl)-2-oxopropyl phosphate + L-glutamate</text>
        <dbReference type="Rhea" id="RHEA:23744"/>
        <dbReference type="ChEBI" id="CHEBI:16810"/>
        <dbReference type="ChEBI" id="CHEBI:29985"/>
        <dbReference type="ChEBI" id="CHEBI:57766"/>
        <dbReference type="ChEBI" id="CHEBI:57980"/>
        <dbReference type="EC" id="2.6.1.9"/>
    </reaction>
</comment>
<comment type="cofactor">
    <cofactor evidence="1">
        <name>pyridoxal 5'-phosphate</name>
        <dbReference type="ChEBI" id="CHEBI:597326"/>
    </cofactor>
</comment>
<comment type="pathway">
    <text evidence="1">Amino-acid biosynthesis; L-histidine biosynthesis; L-histidine from 5-phospho-alpha-D-ribose 1-diphosphate: step 7/9.</text>
</comment>
<comment type="subunit">
    <text evidence="1">Homodimer.</text>
</comment>
<comment type="similarity">
    <text evidence="1">Belongs to the class-II pyridoxal-phosphate-dependent aminotransferase family. Histidinol-phosphate aminotransferase subfamily.</text>
</comment>
<name>HIS81_LEGPH</name>
<proteinExistence type="inferred from homology"/>
<evidence type="ECO:0000255" key="1">
    <source>
        <dbReference type="HAMAP-Rule" id="MF_01023"/>
    </source>
</evidence>
<dbReference type="EC" id="2.6.1.9" evidence="1"/>
<dbReference type="EMBL" id="AE017354">
    <property type="protein sequence ID" value="AAU27283.1"/>
    <property type="molecule type" value="Genomic_DNA"/>
</dbReference>
<dbReference type="RefSeq" id="YP_095230.1">
    <property type="nucleotide sequence ID" value="NC_002942.5"/>
</dbReference>
<dbReference type="SMR" id="Q5ZW88"/>
<dbReference type="STRING" id="272624.lpg1198"/>
<dbReference type="PaxDb" id="272624-lpg1198"/>
<dbReference type="KEGG" id="lpn:lpg1198"/>
<dbReference type="PATRIC" id="fig|272624.6.peg.1260"/>
<dbReference type="eggNOG" id="COG0079">
    <property type="taxonomic scope" value="Bacteria"/>
</dbReference>
<dbReference type="HOGENOM" id="CLU_017584_3_1_6"/>
<dbReference type="OrthoDB" id="9813612at2"/>
<dbReference type="UniPathway" id="UPA00031">
    <property type="reaction ID" value="UER00012"/>
</dbReference>
<dbReference type="Proteomes" id="UP000000609">
    <property type="component" value="Chromosome"/>
</dbReference>
<dbReference type="GO" id="GO:0004400">
    <property type="term" value="F:histidinol-phosphate transaminase activity"/>
    <property type="evidence" value="ECO:0007669"/>
    <property type="project" value="UniProtKB-UniRule"/>
</dbReference>
<dbReference type="GO" id="GO:0030170">
    <property type="term" value="F:pyridoxal phosphate binding"/>
    <property type="evidence" value="ECO:0007669"/>
    <property type="project" value="InterPro"/>
</dbReference>
<dbReference type="GO" id="GO:0000105">
    <property type="term" value="P:L-histidine biosynthetic process"/>
    <property type="evidence" value="ECO:0007669"/>
    <property type="project" value="UniProtKB-UniRule"/>
</dbReference>
<dbReference type="CDD" id="cd00609">
    <property type="entry name" value="AAT_like"/>
    <property type="match status" value="1"/>
</dbReference>
<dbReference type="Gene3D" id="3.90.1150.10">
    <property type="entry name" value="Aspartate Aminotransferase, domain 1"/>
    <property type="match status" value="1"/>
</dbReference>
<dbReference type="Gene3D" id="3.40.640.10">
    <property type="entry name" value="Type I PLP-dependent aspartate aminotransferase-like (Major domain)"/>
    <property type="match status" value="1"/>
</dbReference>
<dbReference type="HAMAP" id="MF_01023">
    <property type="entry name" value="HisC_aminotrans_2"/>
    <property type="match status" value="1"/>
</dbReference>
<dbReference type="InterPro" id="IPR001917">
    <property type="entry name" value="Aminotrans_II_pyridoxalP_BS"/>
</dbReference>
<dbReference type="InterPro" id="IPR004839">
    <property type="entry name" value="Aminotransferase_I/II_large"/>
</dbReference>
<dbReference type="InterPro" id="IPR005861">
    <property type="entry name" value="HisP_aminotrans"/>
</dbReference>
<dbReference type="InterPro" id="IPR015424">
    <property type="entry name" value="PyrdxlP-dep_Trfase"/>
</dbReference>
<dbReference type="InterPro" id="IPR015421">
    <property type="entry name" value="PyrdxlP-dep_Trfase_major"/>
</dbReference>
<dbReference type="InterPro" id="IPR015422">
    <property type="entry name" value="PyrdxlP-dep_Trfase_small"/>
</dbReference>
<dbReference type="NCBIfam" id="TIGR01141">
    <property type="entry name" value="hisC"/>
    <property type="match status" value="1"/>
</dbReference>
<dbReference type="PANTHER" id="PTHR42885:SF2">
    <property type="entry name" value="HISTIDINOL-PHOSPHATE AMINOTRANSFERASE"/>
    <property type="match status" value="1"/>
</dbReference>
<dbReference type="PANTHER" id="PTHR42885">
    <property type="entry name" value="HISTIDINOL-PHOSPHATE AMINOTRANSFERASE-RELATED"/>
    <property type="match status" value="1"/>
</dbReference>
<dbReference type="Pfam" id="PF00155">
    <property type="entry name" value="Aminotran_1_2"/>
    <property type="match status" value="1"/>
</dbReference>
<dbReference type="SUPFAM" id="SSF53383">
    <property type="entry name" value="PLP-dependent transferases"/>
    <property type="match status" value="1"/>
</dbReference>
<dbReference type="PROSITE" id="PS00599">
    <property type="entry name" value="AA_TRANSFER_CLASS_2"/>
    <property type="match status" value="1"/>
</dbReference>
<reference key="1">
    <citation type="journal article" date="2004" name="Science">
        <title>The genomic sequence of the accidental pathogen Legionella pneumophila.</title>
        <authorList>
            <person name="Chien M."/>
            <person name="Morozova I."/>
            <person name="Shi S."/>
            <person name="Sheng H."/>
            <person name="Chen J."/>
            <person name="Gomez S.M."/>
            <person name="Asamani G."/>
            <person name="Hill K."/>
            <person name="Nuara J."/>
            <person name="Feder M."/>
            <person name="Rineer J."/>
            <person name="Greenberg J.J."/>
            <person name="Steshenko V."/>
            <person name="Park S.H."/>
            <person name="Zhao B."/>
            <person name="Teplitskaya E."/>
            <person name="Edwards J.R."/>
            <person name="Pampou S."/>
            <person name="Georghiou A."/>
            <person name="Chou I.-C."/>
            <person name="Iannuccilli W."/>
            <person name="Ulz M.E."/>
            <person name="Kim D.H."/>
            <person name="Geringer-Sameth A."/>
            <person name="Goldsberry C."/>
            <person name="Morozov P."/>
            <person name="Fischer S.G."/>
            <person name="Segal G."/>
            <person name="Qu X."/>
            <person name="Rzhetsky A."/>
            <person name="Zhang P."/>
            <person name="Cayanis E."/>
            <person name="De Jong P.J."/>
            <person name="Ju J."/>
            <person name="Kalachikov S."/>
            <person name="Shuman H.A."/>
            <person name="Russo J.J."/>
        </authorList>
    </citation>
    <scope>NUCLEOTIDE SEQUENCE [LARGE SCALE GENOMIC DNA]</scope>
    <source>
        <strain>Philadelphia 1 / ATCC 33152 / DSM 7513</strain>
    </source>
</reference>
<organism>
    <name type="scientific">Legionella pneumophila subsp. pneumophila (strain Philadelphia 1 / ATCC 33152 / DSM 7513)</name>
    <dbReference type="NCBI Taxonomy" id="272624"/>
    <lineage>
        <taxon>Bacteria</taxon>
        <taxon>Pseudomonadati</taxon>
        <taxon>Pseudomonadota</taxon>
        <taxon>Gammaproteobacteria</taxon>
        <taxon>Legionellales</taxon>
        <taxon>Legionellaceae</taxon>
        <taxon>Legionella</taxon>
    </lineage>
</organism>